<evidence type="ECO:0000250" key="1"/>
<evidence type="ECO:0000250" key="2">
    <source>
        <dbReference type="UniProtKB" id="P0A817"/>
    </source>
</evidence>
<evidence type="ECO:0000250" key="3">
    <source>
        <dbReference type="UniProtKB" id="P13444"/>
    </source>
</evidence>
<evidence type="ECO:0000250" key="4">
    <source>
        <dbReference type="UniProtKB" id="Q00266"/>
    </source>
</evidence>
<evidence type="ECO:0000250" key="5">
    <source>
        <dbReference type="UniProtKB" id="Q96551"/>
    </source>
</evidence>
<evidence type="ECO:0000305" key="6"/>
<dbReference type="EC" id="2.5.1.6" evidence="5"/>
<dbReference type="EMBL" id="AF170798">
    <property type="protein sequence ID" value="AAD48485.1"/>
    <property type="molecule type" value="mRNA"/>
</dbReference>
<dbReference type="SMR" id="Q9SBQ7"/>
<dbReference type="UniPathway" id="UPA00315">
    <property type="reaction ID" value="UER00080"/>
</dbReference>
<dbReference type="GO" id="GO:0005737">
    <property type="term" value="C:cytoplasm"/>
    <property type="evidence" value="ECO:0007669"/>
    <property type="project" value="UniProtKB-SubCell"/>
</dbReference>
<dbReference type="GO" id="GO:0005524">
    <property type="term" value="F:ATP binding"/>
    <property type="evidence" value="ECO:0007669"/>
    <property type="project" value="UniProtKB-KW"/>
</dbReference>
<dbReference type="GO" id="GO:0046872">
    <property type="term" value="F:metal ion binding"/>
    <property type="evidence" value="ECO:0007669"/>
    <property type="project" value="UniProtKB-KW"/>
</dbReference>
<dbReference type="GO" id="GO:0004478">
    <property type="term" value="F:methionine adenosyltransferase activity"/>
    <property type="evidence" value="ECO:0007669"/>
    <property type="project" value="UniProtKB-EC"/>
</dbReference>
<dbReference type="GO" id="GO:0006730">
    <property type="term" value="P:one-carbon metabolic process"/>
    <property type="evidence" value="ECO:0007669"/>
    <property type="project" value="UniProtKB-KW"/>
</dbReference>
<dbReference type="GO" id="GO:0006556">
    <property type="term" value="P:S-adenosylmethionine biosynthetic process"/>
    <property type="evidence" value="ECO:0007669"/>
    <property type="project" value="UniProtKB-UniPathway"/>
</dbReference>
<dbReference type="CDD" id="cd18079">
    <property type="entry name" value="S-AdoMet_synt"/>
    <property type="match status" value="1"/>
</dbReference>
<dbReference type="FunFam" id="3.30.300.10:FF:000003">
    <property type="entry name" value="S-adenosylmethionine synthase"/>
    <property type="match status" value="1"/>
</dbReference>
<dbReference type="FunFam" id="3.30.300.10:FF:000004">
    <property type="entry name" value="S-adenosylmethionine synthase"/>
    <property type="match status" value="1"/>
</dbReference>
<dbReference type="FunFam" id="3.30.300.10:FF:000011">
    <property type="entry name" value="S-adenosylmethionine synthase"/>
    <property type="match status" value="1"/>
</dbReference>
<dbReference type="FunFam" id="3.30.300.10:FF:000021">
    <property type="entry name" value="S-adenosylmethionine synthetase 1"/>
    <property type="match status" value="1"/>
</dbReference>
<dbReference type="Gene3D" id="3.30.300.10">
    <property type="match status" value="3"/>
</dbReference>
<dbReference type="HAMAP" id="MF_00086">
    <property type="entry name" value="S_AdoMet_synth1"/>
    <property type="match status" value="1"/>
</dbReference>
<dbReference type="InterPro" id="IPR022631">
    <property type="entry name" value="ADOMET_SYNTHASE_CS"/>
</dbReference>
<dbReference type="InterPro" id="IPR022630">
    <property type="entry name" value="S-AdoMet_synt_C"/>
</dbReference>
<dbReference type="InterPro" id="IPR022629">
    <property type="entry name" value="S-AdoMet_synt_central"/>
</dbReference>
<dbReference type="InterPro" id="IPR022628">
    <property type="entry name" value="S-AdoMet_synt_N"/>
</dbReference>
<dbReference type="InterPro" id="IPR002133">
    <property type="entry name" value="S-AdoMet_synthetase"/>
</dbReference>
<dbReference type="InterPro" id="IPR022636">
    <property type="entry name" value="S-AdoMet_synthetase_sfam"/>
</dbReference>
<dbReference type="NCBIfam" id="TIGR01034">
    <property type="entry name" value="metK"/>
    <property type="match status" value="1"/>
</dbReference>
<dbReference type="PANTHER" id="PTHR11964">
    <property type="entry name" value="S-ADENOSYLMETHIONINE SYNTHETASE"/>
    <property type="match status" value="1"/>
</dbReference>
<dbReference type="Pfam" id="PF02773">
    <property type="entry name" value="S-AdoMet_synt_C"/>
    <property type="match status" value="1"/>
</dbReference>
<dbReference type="Pfam" id="PF02772">
    <property type="entry name" value="S-AdoMet_synt_M"/>
    <property type="match status" value="1"/>
</dbReference>
<dbReference type="Pfam" id="PF00438">
    <property type="entry name" value="S-AdoMet_synt_N"/>
    <property type="match status" value="1"/>
</dbReference>
<dbReference type="PIRSF" id="PIRSF000497">
    <property type="entry name" value="MAT"/>
    <property type="match status" value="1"/>
</dbReference>
<dbReference type="SUPFAM" id="SSF55973">
    <property type="entry name" value="S-adenosylmethionine synthetase"/>
    <property type="match status" value="3"/>
</dbReference>
<dbReference type="PROSITE" id="PS00376">
    <property type="entry name" value="ADOMET_SYNTHASE_1"/>
    <property type="match status" value="1"/>
</dbReference>
<dbReference type="PROSITE" id="PS00377">
    <property type="entry name" value="ADOMET_SYNTHASE_2"/>
    <property type="match status" value="1"/>
</dbReference>
<protein>
    <recommendedName>
        <fullName>S-adenosylmethionine synthase 3</fullName>
        <shortName>AdoMet synthase 3</shortName>
        <ecNumber evidence="5">2.5.1.6</ecNumber>
    </recommendedName>
    <alternativeName>
        <fullName>Methionine adenosyltransferase 3</fullName>
        <shortName>MAT 3</shortName>
    </alternativeName>
</protein>
<comment type="function">
    <text evidence="5">Catalyzes the formation of S-adenosylmethionine from methionine and ATP. The reaction comprises two steps that are both catalyzed by the same enzyme: formation of S-adenosylmethionine (AdoMet) and triphosphate, and subsequent hydrolysis of the triphosphate.</text>
</comment>
<comment type="catalytic activity">
    <reaction evidence="5">
        <text>L-methionine + ATP + H2O = S-adenosyl-L-methionine + phosphate + diphosphate</text>
        <dbReference type="Rhea" id="RHEA:21080"/>
        <dbReference type="ChEBI" id="CHEBI:15377"/>
        <dbReference type="ChEBI" id="CHEBI:30616"/>
        <dbReference type="ChEBI" id="CHEBI:33019"/>
        <dbReference type="ChEBI" id="CHEBI:43474"/>
        <dbReference type="ChEBI" id="CHEBI:57844"/>
        <dbReference type="ChEBI" id="CHEBI:59789"/>
        <dbReference type="EC" id="2.5.1.6"/>
    </reaction>
</comment>
<comment type="cofactor">
    <cofactor evidence="5">
        <name>Mn(2+)</name>
        <dbReference type="ChEBI" id="CHEBI:29035"/>
    </cofactor>
    <cofactor evidence="5">
        <name>Mg(2+)</name>
        <dbReference type="ChEBI" id="CHEBI:18420"/>
    </cofactor>
    <cofactor evidence="5">
        <name>Co(2+)</name>
        <dbReference type="ChEBI" id="CHEBI:48828"/>
    </cofactor>
    <text evidence="3 5">Binds 2 divalent ions per subunit. The metal ions interact primarily with the substrate (By similarity). Can utilize magnesium, manganese or cobalt (in vitro) (By similarity).</text>
</comment>
<comment type="cofactor">
    <cofactor evidence="5">
        <name>K(+)</name>
        <dbReference type="ChEBI" id="CHEBI:29103"/>
    </cofactor>
    <text evidence="3">Binds 1 potassium ion per subunit. The potassium ion interacts primarily with the substrate (By similarity).</text>
</comment>
<comment type="pathway">
    <text evidence="5">Amino-acid biosynthesis; S-adenosyl-L-methionine biosynthesis; S-adenosyl-L-methionine from L-methionine: step 1/1.</text>
</comment>
<comment type="subunit">
    <text evidence="1">Homotetramer.</text>
</comment>
<comment type="subcellular location">
    <subcellularLocation>
        <location evidence="1">Cytoplasm</location>
    </subcellularLocation>
</comment>
<comment type="similarity">
    <text evidence="6">Belongs to the AdoMet synthase family.</text>
</comment>
<reference key="1">
    <citation type="online journal article" date="1999" name="Plant Gene Register">
        <title>Nucleotide sequence of a cDNA encoding type I S-adenosyl-L-methionine synthetase from Petunia hybrida.</title>
        <authorList>
            <person name="Hsu Y.-H."/>
            <person name="To K.-Y."/>
        </authorList>
        <locator>PGR99-160</locator>
    </citation>
    <scope>NUCLEOTIDE SEQUENCE [MRNA]</scope>
    <source>
        <strain>cv. Violet</strain>
        <tissue>Corolla</tissue>
    </source>
</reference>
<accession>Q9SBQ7</accession>
<keyword id="KW-0067">ATP-binding</keyword>
<keyword id="KW-0170">Cobalt</keyword>
<keyword id="KW-0963">Cytoplasm</keyword>
<keyword id="KW-0460">Magnesium</keyword>
<keyword id="KW-0479">Metal-binding</keyword>
<keyword id="KW-0547">Nucleotide-binding</keyword>
<keyword id="KW-0554">One-carbon metabolism</keyword>
<keyword id="KW-0630">Potassium</keyword>
<keyword id="KW-0808">Transferase</keyword>
<name>METK3_PETHY</name>
<organism>
    <name type="scientific">Petunia hybrida</name>
    <name type="common">Petunia</name>
    <dbReference type="NCBI Taxonomy" id="4102"/>
    <lineage>
        <taxon>Eukaryota</taxon>
        <taxon>Viridiplantae</taxon>
        <taxon>Streptophyta</taxon>
        <taxon>Embryophyta</taxon>
        <taxon>Tracheophyta</taxon>
        <taxon>Spermatophyta</taxon>
        <taxon>Magnoliopsida</taxon>
        <taxon>eudicotyledons</taxon>
        <taxon>Gunneridae</taxon>
        <taxon>Pentapetalae</taxon>
        <taxon>asterids</taxon>
        <taxon>lamiids</taxon>
        <taxon>Solanales</taxon>
        <taxon>Solanaceae</taxon>
        <taxon>Petunioideae</taxon>
        <taxon>Petunia</taxon>
    </lineage>
</organism>
<gene>
    <name type="primary">SAM3</name>
</gene>
<proteinExistence type="evidence at transcript level"/>
<feature type="chain" id="PRO_0000363035" description="S-adenosylmethionine synthase 3">
    <location>
        <begin position="1"/>
        <end position="393"/>
    </location>
</feature>
<feature type="binding site" evidence="3">
    <location>
        <position position="9"/>
    </location>
    <ligand>
        <name>Mg(2+)</name>
        <dbReference type="ChEBI" id="CHEBI:18420"/>
    </ligand>
</feature>
<feature type="binding site" description="in other chain" evidence="4">
    <location>
        <position position="15"/>
    </location>
    <ligand>
        <name>ATP</name>
        <dbReference type="ChEBI" id="CHEBI:30616"/>
        <note>ligand shared between two neighboring subunits</note>
    </ligand>
</feature>
<feature type="binding site" evidence="2">
    <location>
        <position position="43"/>
    </location>
    <ligand>
        <name>K(+)</name>
        <dbReference type="ChEBI" id="CHEBI:29103"/>
    </ligand>
</feature>
<feature type="binding site" description="in other chain" evidence="2">
    <location>
        <position position="56"/>
    </location>
    <ligand>
        <name>L-methionine</name>
        <dbReference type="ChEBI" id="CHEBI:57844"/>
        <note>ligand shared between two neighboring subunits</note>
    </ligand>
</feature>
<feature type="binding site" description="in other chain" evidence="2">
    <location>
        <position position="99"/>
    </location>
    <ligand>
        <name>L-methionine</name>
        <dbReference type="ChEBI" id="CHEBI:57844"/>
        <note>ligand shared between two neighboring subunits</note>
    </ligand>
</feature>
<feature type="binding site" description="in other chain" evidence="4">
    <location>
        <begin position="167"/>
        <end position="169"/>
    </location>
    <ligand>
        <name>ATP</name>
        <dbReference type="ChEBI" id="CHEBI:30616"/>
        <note>ligand shared between two neighboring subunits</note>
    </ligand>
</feature>
<feature type="binding site" description="in other chain" evidence="4">
    <location>
        <begin position="235"/>
        <end position="238"/>
    </location>
    <ligand>
        <name>ATP</name>
        <dbReference type="ChEBI" id="CHEBI:30616"/>
        <note>ligand shared between two neighboring subunits</note>
    </ligand>
</feature>
<feature type="binding site" description="in other chain" evidence="4">
    <location>
        <position position="246"/>
    </location>
    <ligand>
        <name>ATP</name>
        <dbReference type="ChEBI" id="CHEBI:30616"/>
        <note>ligand shared between two neighboring subunits</note>
    </ligand>
</feature>
<feature type="binding site" evidence="2">
    <location>
        <position position="246"/>
    </location>
    <ligand>
        <name>L-methionine</name>
        <dbReference type="ChEBI" id="CHEBI:57844"/>
        <note>ligand shared between two neighboring subunits</note>
    </ligand>
</feature>
<feature type="binding site" description="in other chain" evidence="2">
    <location>
        <begin position="252"/>
        <end position="253"/>
    </location>
    <ligand>
        <name>ATP</name>
        <dbReference type="ChEBI" id="CHEBI:30616"/>
        <note>ligand shared between two neighboring subunits</note>
    </ligand>
</feature>
<feature type="binding site" evidence="2">
    <location>
        <position position="269"/>
    </location>
    <ligand>
        <name>ATP</name>
        <dbReference type="ChEBI" id="CHEBI:30616"/>
        <note>ligand shared between two neighboring subunits</note>
    </ligand>
</feature>
<feature type="binding site" evidence="2">
    <location>
        <position position="273"/>
    </location>
    <ligand>
        <name>ATP</name>
        <dbReference type="ChEBI" id="CHEBI:30616"/>
        <note>ligand shared between two neighboring subunits</note>
    </ligand>
</feature>
<feature type="binding site" evidence="3">
    <location>
        <position position="277"/>
    </location>
    <ligand>
        <name>ATP</name>
        <dbReference type="ChEBI" id="CHEBI:30616"/>
        <note>ligand shared between two neighboring subunits</note>
    </ligand>
</feature>
<feature type="binding site" description="in other chain" evidence="2">
    <location>
        <position position="277"/>
    </location>
    <ligand>
        <name>L-methionine</name>
        <dbReference type="ChEBI" id="CHEBI:57844"/>
        <note>ligand shared between two neighboring subunits</note>
    </ligand>
</feature>
<sequence>METFLFTSESVNEGHPDKLCDQISDAVLDACLEQDPESKVACETCTKTNLVMVFGEITTKANVDYEKIVRDTCRNIGFISDDVGLDADNCKVLVYIEQQSPDIAQGVHGHLTKQPEEIGAGDQGHMFGYATDETPEFMPLSHVLATKLGARLTEVRKNGTCPWLRPDGKTQVTVEYYNENGAMVPVRVHTVLISTQHDETVTNDEIAHDLKEHVIKPVIPEKYLDEKTIFHLNPSGRFVIGGPHGDAGLTGRKIIIDTYGGWGAHGGGAFSGKDPTKVDRSGAYIVRQAAKSVVANGLARRCIVQVSYAIGVPEPLSVFVDTYGTGMIPDKEILKIVKENFDFRPGMIAINLDLKRGGNGRFLKTAAYGHFGRDDTDFTWEVVKPLKCEKAQD</sequence>